<evidence type="ECO:0000255" key="1">
    <source>
        <dbReference type="HAMAP-Rule" id="MF_00168"/>
    </source>
</evidence>
<feature type="chain" id="PRO_1000198026" description="Queuine tRNA-ribosyltransferase">
    <location>
        <begin position="1"/>
        <end position="380"/>
    </location>
</feature>
<feature type="region of interest" description="RNA binding" evidence="1">
    <location>
        <begin position="251"/>
        <end position="257"/>
    </location>
</feature>
<feature type="region of interest" description="RNA binding; important for wobble base 34 recognition" evidence="1">
    <location>
        <begin position="275"/>
        <end position="279"/>
    </location>
</feature>
<feature type="active site" description="Proton acceptor" evidence="1">
    <location>
        <position position="96"/>
    </location>
</feature>
<feature type="active site" description="Nucleophile" evidence="1">
    <location>
        <position position="270"/>
    </location>
</feature>
<feature type="binding site" evidence="1">
    <location>
        <begin position="96"/>
        <end position="100"/>
    </location>
    <ligand>
        <name>substrate</name>
    </ligand>
</feature>
<feature type="binding site" evidence="1">
    <location>
        <position position="150"/>
    </location>
    <ligand>
        <name>substrate</name>
    </ligand>
</feature>
<feature type="binding site" evidence="1">
    <location>
        <position position="193"/>
    </location>
    <ligand>
        <name>substrate</name>
    </ligand>
</feature>
<feature type="binding site" evidence="1">
    <location>
        <position position="220"/>
    </location>
    <ligand>
        <name>substrate</name>
    </ligand>
</feature>
<feature type="binding site" evidence="1">
    <location>
        <position position="308"/>
    </location>
    <ligand>
        <name>Zn(2+)</name>
        <dbReference type="ChEBI" id="CHEBI:29105"/>
    </ligand>
</feature>
<feature type="binding site" evidence="1">
    <location>
        <position position="310"/>
    </location>
    <ligand>
        <name>Zn(2+)</name>
        <dbReference type="ChEBI" id="CHEBI:29105"/>
    </ligand>
</feature>
<feature type="binding site" evidence="1">
    <location>
        <position position="313"/>
    </location>
    <ligand>
        <name>Zn(2+)</name>
        <dbReference type="ChEBI" id="CHEBI:29105"/>
    </ligand>
</feature>
<feature type="binding site" evidence="1">
    <location>
        <position position="339"/>
    </location>
    <ligand>
        <name>Zn(2+)</name>
        <dbReference type="ChEBI" id="CHEBI:29105"/>
    </ligand>
</feature>
<organism>
    <name type="scientific">Streptococcus pneumoniae (strain 70585)</name>
    <dbReference type="NCBI Taxonomy" id="488221"/>
    <lineage>
        <taxon>Bacteria</taxon>
        <taxon>Bacillati</taxon>
        <taxon>Bacillota</taxon>
        <taxon>Bacilli</taxon>
        <taxon>Lactobacillales</taxon>
        <taxon>Streptococcaceae</taxon>
        <taxon>Streptococcus</taxon>
    </lineage>
</organism>
<sequence length="380" mass="43120">MSDSPIKYRLIKKEKHTGARLGEIITPHGTFPTPMFMPVGTQATVKTQSPEELKEMGSGIILSNTYHLWLRPGDELIARAGGLHKFMNWDQPILTDSGGFQVYSLADSRNITEEGVTFKNHLNGSKMFLSPEKAISIQNNLGSDIMMSFDECPQFYQPYDYVKKSIERTSRWAERGLKAHRRPHDQGLFGIVQGAGFEDLRRQSAHDLVSMDFSGYSIGGLAVGETHEEMNAVLDFTTQLLPENKPRYLMGVGAPDSLIDGVIRGVDMFDCVLPTRIARNGTCMTSQGRLVVKNAQFAEDFTPLDPECDCYTCNNYTRAYLRHLLKADETFGIRLTSYHNLYFLLNLMKQVRQAIMDDNLLEFRKYFVEKYGYNKSGRNF</sequence>
<proteinExistence type="inferred from homology"/>
<name>TGT_STRP7</name>
<comment type="function">
    <text evidence="1">Catalyzes the base-exchange of a guanine (G) residue with the queuine precursor 7-aminomethyl-7-deazaguanine (PreQ1) at position 34 (anticodon wobble position) in tRNAs with GU(N) anticodons (tRNA-Asp, -Asn, -His and -Tyr). Catalysis occurs through a double-displacement mechanism. The nucleophile active site attacks the C1' of nucleotide 34 to detach the guanine base from the RNA, forming a covalent enzyme-RNA intermediate. The proton acceptor active site deprotonates the incoming PreQ1, allowing a nucleophilic attack on the C1' of the ribose to form the product. After dissociation, two additional enzymatic reactions on the tRNA convert PreQ1 to queuine (Q), resulting in the hypermodified nucleoside queuosine (7-(((4,5-cis-dihydroxy-2-cyclopenten-1-yl)amino)methyl)-7-deazaguanosine).</text>
</comment>
<comment type="catalytic activity">
    <reaction evidence="1">
        <text>7-aminomethyl-7-carbaguanine + guanosine(34) in tRNA = 7-aminomethyl-7-carbaguanosine(34) in tRNA + guanine</text>
        <dbReference type="Rhea" id="RHEA:24104"/>
        <dbReference type="Rhea" id="RHEA-COMP:10341"/>
        <dbReference type="Rhea" id="RHEA-COMP:10342"/>
        <dbReference type="ChEBI" id="CHEBI:16235"/>
        <dbReference type="ChEBI" id="CHEBI:58703"/>
        <dbReference type="ChEBI" id="CHEBI:74269"/>
        <dbReference type="ChEBI" id="CHEBI:82833"/>
        <dbReference type="EC" id="2.4.2.29"/>
    </reaction>
</comment>
<comment type="cofactor">
    <cofactor evidence="1">
        <name>Zn(2+)</name>
        <dbReference type="ChEBI" id="CHEBI:29105"/>
    </cofactor>
    <text evidence="1">Binds 1 zinc ion per subunit.</text>
</comment>
<comment type="pathway">
    <text evidence="1">tRNA modification; tRNA-queuosine biosynthesis.</text>
</comment>
<comment type="subunit">
    <text evidence="1">Homodimer. Within each dimer, one monomer is responsible for RNA recognition and catalysis, while the other monomer binds to the replacement base PreQ1.</text>
</comment>
<comment type="similarity">
    <text evidence="1">Belongs to the queuine tRNA-ribosyltransferase family.</text>
</comment>
<gene>
    <name evidence="1" type="primary">tgt</name>
    <name type="ordered locus">SP70585_2146</name>
</gene>
<reference key="1">
    <citation type="journal article" date="2010" name="Genome Biol.">
        <title>Structure and dynamics of the pan-genome of Streptococcus pneumoniae and closely related species.</title>
        <authorList>
            <person name="Donati C."/>
            <person name="Hiller N.L."/>
            <person name="Tettelin H."/>
            <person name="Muzzi A."/>
            <person name="Croucher N.J."/>
            <person name="Angiuoli S.V."/>
            <person name="Oggioni M."/>
            <person name="Dunning Hotopp J.C."/>
            <person name="Hu F.Z."/>
            <person name="Riley D.R."/>
            <person name="Covacci A."/>
            <person name="Mitchell T.J."/>
            <person name="Bentley S.D."/>
            <person name="Kilian M."/>
            <person name="Ehrlich G.D."/>
            <person name="Rappuoli R."/>
            <person name="Moxon E.R."/>
            <person name="Masignani V."/>
        </authorList>
    </citation>
    <scope>NUCLEOTIDE SEQUENCE [LARGE SCALE GENOMIC DNA]</scope>
    <source>
        <strain>70585</strain>
    </source>
</reference>
<keyword id="KW-0328">Glycosyltransferase</keyword>
<keyword id="KW-0479">Metal-binding</keyword>
<keyword id="KW-0671">Queuosine biosynthesis</keyword>
<keyword id="KW-0808">Transferase</keyword>
<keyword id="KW-0819">tRNA processing</keyword>
<keyword id="KW-0862">Zinc</keyword>
<protein>
    <recommendedName>
        <fullName evidence="1">Queuine tRNA-ribosyltransferase</fullName>
        <ecNumber evidence="1">2.4.2.29</ecNumber>
    </recommendedName>
    <alternativeName>
        <fullName evidence="1">Guanine insertion enzyme</fullName>
    </alternativeName>
    <alternativeName>
        <fullName evidence="1">tRNA-guanine transglycosylase</fullName>
    </alternativeName>
</protein>
<dbReference type="EC" id="2.4.2.29" evidence="1"/>
<dbReference type="EMBL" id="CP000918">
    <property type="protein sequence ID" value="ACO16212.1"/>
    <property type="molecule type" value="Genomic_DNA"/>
</dbReference>
<dbReference type="RefSeq" id="WP_001285242.1">
    <property type="nucleotide sequence ID" value="NC_012468.1"/>
</dbReference>
<dbReference type="SMR" id="C1CAA6"/>
<dbReference type="KEGG" id="snm:SP70585_2146"/>
<dbReference type="HOGENOM" id="CLU_022060_0_1_9"/>
<dbReference type="UniPathway" id="UPA00392"/>
<dbReference type="Proteomes" id="UP000002211">
    <property type="component" value="Chromosome"/>
</dbReference>
<dbReference type="GO" id="GO:0005829">
    <property type="term" value="C:cytosol"/>
    <property type="evidence" value="ECO:0007669"/>
    <property type="project" value="TreeGrafter"/>
</dbReference>
<dbReference type="GO" id="GO:0046872">
    <property type="term" value="F:metal ion binding"/>
    <property type="evidence" value="ECO:0007669"/>
    <property type="project" value="UniProtKB-KW"/>
</dbReference>
<dbReference type="GO" id="GO:0008479">
    <property type="term" value="F:tRNA-guanosine(34) queuine transglycosylase activity"/>
    <property type="evidence" value="ECO:0007669"/>
    <property type="project" value="UniProtKB-UniRule"/>
</dbReference>
<dbReference type="GO" id="GO:0008616">
    <property type="term" value="P:queuosine biosynthetic process"/>
    <property type="evidence" value="ECO:0007669"/>
    <property type="project" value="UniProtKB-UniRule"/>
</dbReference>
<dbReference type="GO" id="GO:0002099">
    <property type="term" value="P:tRNA wobble guanine modification"/>
    <property type="evidence" value="ECO:0007669"/>
    <property type="project" value="TreeGrafter"/>
</dbReference>
<dbReference type="GO" id="GO:0101030">
    <property type="term" value="P:tRNA-guanine transglycosylation"/>
    <property type="evidence" value="ECO:0007669"/>
    <property type="project" value="InterPro"/>
</dbReference>
<dbReference type="FunFam" id="3.20.20.105:FF:000001">
    <property type="entry name" value="Queuine tRNA-ribosyltransferase"/>
    <property type="match status" value="1"/>
</dbReference>
<dbReference type="Gene3D" id="3.20.20.105">
    <property type="entry name" value="Queuine tRNA-ribosyltransferase-like"/>
    <property type="match status" value="1"/>
</dbReference>
<dbReference type="HAMAP" id="MF_00168">
    <property type="entry name" value="Q_tRNA_Tgt"/>
    <property type="match status" value="1"/>
</dbReference>
<dbReference type="InterPro" id="IPR050076">
    <property type="entry name" value="ArchSynthase1/Queuine_TRR"/>
</dbReference>
<dbReference type="InterPro" id="IPR004803">
    <property type="entry name" value="TGT"/>
</dbReference>
<dbReference type="InterPro" id="IPR036511">
    <property type="entry name" value="TGT-like_sf"/>
</dbReference>
<dbReference type="InterPro" id="IPR002616">
    <property type="entry name" value="tRNA_ribo_trans-like"/>
</dbReference>
<dbReference type="NCBIfam" id="TIGR00430">
    <property type="entry name" value="Q_tRNA_tgt"/>
    <property type="match status" value="1"/>
</dbReference>
<dbReference type="NCBIfam" id="TIGR00449">
    <property type="entry name" value="tgt_general"/>
    <property type="match status" value="1"/>
</dbReference>
<dbReference type="PANTHER" id="PTHR46499">
    <property type="entry name" value="QUEUINE TRNA-RIBOSYLTRANSFERASE"/>
    <property type="match status" value="1"/>
</dbReference>
<dbReference type="PANTHER" id="PTHR46499:SF1">
    <property type="entry name" value="QUEUINE TRNA-RIBOSYLTRANSFERASE"/>
    <property type="match status" value="1"/>
</dbReference>
<dbReference type="Pfam" id="PF01702">
    <property type="entry name" value="TGT"/>
    <property type="match status" value="1"/>
</dbReference>
<dbReference type="SUPFAM" id="SSF51713">
    <property type="entry name" value="tRNA-guanine transglycosylase"/>
    <property type="match status" value="1"/>
</dbReference>
<accession>C1CAA6</accession>